<feature type="signal peptide" evidence="1">
    <location>
        <begin position="1"/>
        <end position="33"/>
    </location>
</feature>
<feature type="chain" id="PRO_0000333034" description="Formylglycine-generating enzyme">
    <location>
        <begin position="34"/>
        <end position="374"/>
    </location>
</feature>
<feature type="region of interest" description="Disordered" evidence="3">
    <location>
        <begin position="57"/>
        <end position="102"/>
    </location>
</feature>
<feature type="region of interest" description="Interaction with sulfatases" evidence="1">
    <location>
        <begin position="341"/>
        <end position="360"/>
    </location>
</feature>
<feature type="binding site" evidence="1">
    <location>
        <position position="130"/>
    </location>
    <ligand>
        <name>Ca(2+)</name>
        <dbReference type="ChEBI" id="CHEBI:29108"/>
        <label>2</label>
    </ligand>
</feature>
<feature type="binding site" evidence="1">
    <location>
        <position position="259"/>
    </location>
    <ligand>
        <name>Ca(2+)</name>
        <dbReference type="ChEBI" id="CHEBI:29108"/>
        <label>1</label>
    </ligand>
</feature>
<feature type="binding site" evidence="1">
    <location>
        <position position="260"/>
    </location>
    <ligand>
        <name>Ca(2+)</name>
        <dbReference type="ChEBI" id="CHEBI:29108"/>
        <label>1</label>
    </ligand>
</feature>
<feature type="binding site" evidence="1">
    <location>
        <position position="273"/>
    </location>
    <ligand>
        <name>Ca(2+)</name>
        <dbReference type="ChEBI" id="CHEBI:29108"/>
        <label>1</label>
    </ligand>
</feature>
<feature type="binding site" evidence="1">
    <location>
        <position position="275"/>
    </location>
    <ligand>
        <name>Ca(2+)</name>
        <dbReference type="ChEBI" id="CHEBI:29108"/>
        <label>1</label>
    </ligand>
</feature>
<feature type="binding site" evidence="1">
    <location>
        <position position="293"/>
    </location>
    <ligand>
        <name>Ca(2+)</name>
        <dbReference type="ChEBI" id="CHEBI:29108"/>
        <label>2</label>
    </ligand>
</feature>
<feature type="binding site" evidence="1">
    <location>
        <position position="296"/>
    </location>
    <ligand>
        <name>Ca(2+)</name>
        <dbReference type="ChEBI" id="CHEBI:29108"/>
        <label>2</label>
    </ligand>
</feature>
<feature type="binding site" evidence="1">
    <location>
        <position position="298"/>
    </location>
    <ligand>
        <name>Ca(2+)</name>
        <dbReference type="ChEBI" id="CHEBI:29108"/>
        <label>2</label>
    </ligand>
</feature>
<feature type="binding site" evidence="1">
    <location>
        <position position="300"/>
    </location>
    <ligand>
        <name>Ca(2+)</name>
        <dbReference type="ChEBI" id="CHEBI:29108"/>
        <label>2</label>
    </ligand>
</feature>
<feature type="binding site" evidence="1">
    <location>
        <position position="336"/>
    </location>
    <ligand>
        <name>Cu(2+)</name>
        <dbReference type="ChEBI" id="CHEBI:29036"/>
        <note>catalytic</note>
    </ligand>
</feature>
<feature type="binding site" evidence="1">
    <location>
        <position position="341"/>
    </location>
    <ligand>
        <name>Cu(2+)</name>
        <dbReference type="ChEBI" id="CHEBI:29036"/>
        <note>catalytic</note>
    </ligand>
</feature>
<feature type="glycosylation site" description="N-linked (GlcNAc...) asparagine" evidence="2">
    <location>
        <position position="141"/>
    </location>
</feature>
<feature type="disulfide bond" evidence="1">
    <location>
        <begin position="50"/>
        <end position="52"/>
    </location>
</feature>
<feature type="disulfide bond" evidence="1">
    <location>
        <begin position="218"/>
        <end position="365"/>
    </location>
</feature>
<feature type="disulfide bond" evidence="1">
    <location>
        <begin position="235"/>
        <end position="346"/>
    </location>
</feature>
<comment type="function">
    <text evidence="1">Oxidase that catalyzes the conversion of cysteine to 3-oxoalanine on target proteins, using molecular oxygen and an unidentified reducing agent. 3-oxoalanine modification, which is also named formylglycine (fGly), occurs in the maturation of arylsulfatases and some alkaline phosphatases that use the hydrated form of 3-oxoalanine as a catalytic nucleophile. Known substrates include GALNS, ARSA, STS and ARSE.</text>
</comment>
<comment type="catalytic activity">
    <reaction evidence="1">
        <text>L-cysteinyl-[sulfatase] + 2 a thiol + O2 = an organic disulfide + 3-oxo-L-alanyl-[sulfatase] + hydrogen sulfide + H2O + H(+)</text>
        <dbReference type="Rhea" id="RHEA:51152"/>
        <dbReference type="Rhea" id="RHEA-COMP:12900"/>
        <dbReference type="Rhea" id="RHEA-COMP:12901"/>
        <dbReference type="ChEBI" id="CHEBI:15377"/>
        <dbReference type="ChEBI" id="CHEBI:15378"/>
        <dbReference type="ChEBI" id="CHEBI:15379"/>
        <dbReference type="ChEBI" id="CHEBI:29256"/>
        <dbReference type="ChEBI" id="CHEBI:29919"/>
        <dbReference type="ChEBI" id="CHEBI:29950"/>
        <dbReference type="ChEBI" id="CHEBI:35489"/>
        <dbReference type="ChEBI" id="CHEBI:85621"/>
        <dbReference type="EC" id="1.8.3.7"/>
    </reaction>
</comment>
<comment type="cofactor">
    <cofactor evidence="1">
        <name>Cu(2+)</name>
        <dbReference type="ChEBI" id="CHEBI:29036"/>
    </cofactor>
    <text evidence="1">The catalytic copper is required to activate oxygen and catalyze oxidative C-H activation.</text>
</comment>
<comment type="pathway">
    <text evidence="1">Protein modification; sulfatase oxidation.</text>
</comment>
<comment type="subunit">
    <text evidence="1">Monomer, homodimer and heterodimer with SUMF2.</text>
</comment>
<comment type="subcellular location">
    <subcellularLocation>
        <location evidence="1">Endoplasmic reticulum lumen</location>
    </subcellularLocation>
</comment>
<comment type="PTM">
    <text evidence="1">N-glycosylated. Contains high-mannose-type oligosaccharides.</text>
</comment>
<comment type="similarity">
    <text evidence="4">Belongs to the sulfatase-modifying factor family.</text>
</comment>
<comment type="caution">
    <text evidence="1">The enzyme reaction was initially thought to act via a redox-active disulfide bond mechanism; however the disulfide bond only takes place with inactive enzyme that lacks the copper cofactor. The catalytic copper is required to activate oxygen and catalyze oxidative C-H activation.</text>
</comment>
<keyword id="KW-0106">Calcium</keyword>
<keyword id="KW-0186">Copper</keyword>
<keyword id="KW-1015">Disulfide bond</keyword>
<keyword id="KW-0256">Endoplasmic reticulum</keyword>
<keyword id="KW-0325">Glycoprotein</keyword>
<keyword id="KW-0479">Metal-binding</keyword>
<keyword id="KW-0560">Oxidoreductase</keyword>
<keyword id="KW-1185">Reference proteome</keyword>
<keyword id="KW-0732">Signal</keyword>
<dbReference type="EC" id="1.8.3.7" evidence="1"/>
<dbReference type="EMBL" id="BC119885">
    <property type="protein sequence ID" value="AAI19886.1"/>
    <property type="molecule type" value="mRNA"/>
</dbReference>
<dbReference type="RefSeq" id="NP_001069544.1">
    <property type="nucleotide sequence ID" value="NM_001076076.1"/>
</dbReference>
<dbReference type="SMR" id="Q0P5L5"/>
<dbReference type="FunCoup" id="Q0P5L5">
    <property type="interactions" value="873"/>
</dbReference>
<dbReference type="STRING" id="9913.ENSBTAP00000052631"/>
<dbReference type="GlyCosmos" id="Q0P5L5">
    <property type="glycosylation" value="1 site, No reported glycans"/>
</dbReference>
<dbReference type="GlyGen" id="Q0P5L5">
    <property type="glycosylation" value="1 site"/>
</dbReference>
<dbReference type="PaxDb" id="9913-ENSBTAP00000052631"/>
<dbReference type="Ensembl" id="ENSBTAT00000055237.4">
    <property type="protein sequence ID" value="ENSBTAP00000052631.2"/>
    <property type="gene ID" value="ENSBTAG00000039855.4"/>
</dbReference>
<dbReference type="GeneID" id="536435"/>
<dbReference type="KEGG" id="bta:536435"/>
<dbReference type="CTD" id="285362"/>
<dbReference type="VEuPathDB" id="HostDB:ENSBTAG00000039855"/>
<dbReference type="VGNC" id="VGNC:35471">
    <property type="gene designation" value="SUMF1"/>
</dbReference>
<dbReference type="eggNOG" id="ENOG502QVDG">
    <property type="taxonomic scope" value="Eukaryota"/>
</dbReference>
<dbReference type="GeneTree" id="ENSGT00390000008983"/>
<dbReference type="HOGENOM" id="CLU_012431_4_1_1"/>
<dbReference type="InParanoid" id="Q0P5L5"/>
<dbReference type="OMA" id="RQNVYDL"/>
<dbReference type="OrthoDB" id="659at2759"/>
<dbReference type="TreeFam" id="TF324027"/>
<dbReference type="Reactome" id="R-BTA-1663150">
    <property type="pathway name" value="The activation of arylsulfatases"/>
</dbReference>
<dbReference type="Reactome" id="R-BTA-9840310">
    <property type="pathway name" value="Glycosphingolipid catabolism"/>
</dbReference>
<dbReference type="UniPathway" id="UPA00910"/>
<dbReference type="Proteomes" id="UP000009136">
    <property type="component" value="Chromosome 22"/>
</dbReference>
<dbReference type="Bgee" id="ENSBTAG00000039855">
    <property type="expression patterns" value="Expressed in saliva-secreting gland and 104 other cell types or tissues"/>
</dbReference>
<dbReference type="GO" id="GO:0005783">
    <property type="term" value="C:endoplasmic reticulum"/>
    <property type="evidence" value="ECO:0000250"/>
    <property type="project" value="UniProtKB"/>
</dbReference>
<dbReference type="GO" id="GO:0005788">
    <property type="term" value="C:endoplasmic reticulum lumen"/>
    <property type="evidence" value="ECO:0007669"/>
    <property type="project" value="UniProtKB-SubCell"/>
</dbReference>
<dbReference type="GO" id="GO:1903135">
    <property type="term" value="F:cupric ion binding"/>
    <property type="evidence" value="ECO:0000250"/>
    <property type="project" value="UniProtKB"/>
</dbReference>
<dbReference type="GO" id="GO:0120147">
    <property type="term" value="F:formylglycine-generating oxidase activity"/>
    <property type="evidence" value="ECO:0000250"/>
    <property type="project" value="UniProtKB"/>
</dbReference>
<dbReference type="GO" id="GO:0042802">
    <property type="term" value="F:identical protein binding"/>
    <property type="evidence" value="ECO:0007669"/>
    <property type="project" value="Ensembl"/>
</dbReference>
<dbReference type="GO" id="GO:0043687">
    <property type="term" value="P:post-translational protein modification"/>
    <property type="evidence" value="ECO:0000250"/>
    <property type="project" value="UniProtKB"/>
</dbReference>
<dbReference type="GO" id="GO:0018158">
    <property type="term" value="P:protein oxidation"/>
    <property type="evidence" value="ECO:0000250"/>
    <property type="project" value="UniProtKB"/>
</dbReference>
<dbReference type="FunFam" id="3.90.1580.10:FF:000001">
    <property type="entry name" value="Sulfatase modifying factor 1"/>
    <property type="match status" value="1"/>
</dbReference>
<dbReference type="Gene3D" id="3.90.1580.10">
    <property type="entry name" value="paralog of FGE (formylglycine-generating enzyme)"/>
    <property type="match status" value="1"/>
</dbReference>
<dbReference type="InterPro" id="IPR016187">
    <property type="entry name" value="CTDL_fold"/>
</dbReference>
<dbReference type="InterPro" id="IPR051043">
    <property type="entry name" value="Sulfatase_Mod_Factor_Kinase"/>
</dbReference>
<dbReference type="InterPro" id="IPR005532">
    <property type="entry name" value="SUMF_dom"/>
</dbReference>
<dbReference type="InterPro" id="IPR042095">
    <property type="entry name" value="SUMF_sf"/>
</dbReference>
<dbReference type="PANTHER" id="PTHR23150:SF19">
    <property type="entry name" value="FORMYLGLYCINE-GENERATING ENZYME"/>
    <property type="match status" value="1"/>
</dbReference>
<dbReference type="PANTHER" id="PTHR23150">
    <property type="entry name" value="SULFATASE MODIFYING FACTOR 1, 2"/>
    <property type="match status" value="1"/>
</dbReference>
<dbReference type="Pfam" id="PF03781">
    <property type="entry name" value="FGE-sulfatase"/>
    <property type="match status" value="1"/>
</dbReference>
<dbReference type="SUPFAM" id="SSF56436">
    <property type="entry name" value="C-type lectin-like"/>
    <property type="match status" value="1"/>
</dbReference>
<name>SUMF1_BOVIN</name>
<gene>
    <name evidence="1" type="primary">SUMF1</name>
</gene>
<proteinExistence type="evidence at transcript level"/>
<protein>
    <recommendedName>
        <fullName evidence="1">Formylglycine-generating enzyme</fullName>
        <shortName evidence="1">FGE</shortName>
        <ecNumber evidence="1">1.8.3.7</ecNumber>
    </recommendedName>
    <alternativeName>
        <fullName evidence="1">C-alpha-formylglycine-generating enzyme 1</fullName>
    </alternativeName>
    <alternativeName>
        <fullName evidence="1">Sulfatase-modifying factor 1</fullName>
    </alternativeName>
</protein>
<accession>Q0P5L5</accession>
<reference key="1">
    <citation type="submission" date="2006-08" db="EMBL/GenBank/DDBJ databases">
        <authorList>
            <consortium name="NIH - Mammalian Gene Collection (MGC) project"/>
        </authorList>
    </citation>
    <scope>NUCLEOTIDE SEQUENCE [LARGE SCALE MRNA]</scope>
    <source>
        <strain>Hereford</strain>
        <tissue>Hippocampus</tissue>
    </source>
</reference>
<sequence>MAAPALGPARGCGAELTLVLLLSLFLLLGWAAGGEEAGPEAGAPSLVGSCGCGNPQRPGAQGSSAAAHRYSREANAPGSVPGGRPSPPTKMVPIPAGVFTMGTDDPQIKQDGEAPARRVAIDAFYMDAYEVSNAEFEKFVNSTGYLTEAEKFGDSFVFEGMLSEQVKSDIQQAVAAAPWWLPVKGANWRHPEGPDSTVLHRPDHPVLHVSWNDAVAYCTWAGKRLPTEAEWEYSCRGGLQNRLFPWGNKLQPKGQHYANIWQGEFPVTNTGEDGFRGTAPVDAFPPNGYGLYNIVGNAWEWTSDWWTVHHSAEETINPKGPPSGKDRVKKGGSYMCHKSYCYRYRCAARSQNTPDSSASNLGFRCAADHLPTTG</sequence>
<evidence type="ECO:0000250" key="1">
    <source>
        <dbReference type="UniProtKB" id="Q8NBK3"/>
    </source>
</evidence>
<evidence type="ECO:0000255" key="2">
    <source>
        <dbReference type="PROSITE-ProRule" id="PRU00498"/>
    </source>
</evidence>
<evidence type="ECO:0000256" key="3">
    <source>
        <dbReference type="SAM" id="MobiDB-lite"/>
    </source>
</evidence>
<evidence type="ECO:0000305" key="4"/>
<organism>
    <name type="scientific">Bos taurus</name>
    <name type="common">Bovine</name>
    <dbReference type="NCBI Taxonomy" id="9913"/>
    <lineage>
        <taxon>Eukaryota</taxon>
        <taxon>Metazoa</taxon>
        <taxon>Chordata</taxon>
        <taxon>Craniata</taxon>
        <taxon>Vertebrata</taxon>
        <taxon>Euteleostomi</taxon>
        <taxon>Mammalia</taxon>
        <taxon>Eutheria</taxon>
        <taxon>Laurasiatheria</taxon>
        <taxon>Artiodactyla</taxon>
        <taxon>Ruminantia</taxon>
        <taxon>Pecora</taxon>
        <taxon>Bovidae</taxon>
        <taxon>Bovinae</taxon>
        <taxon>Bos</taxon>
    </lineage>
</organism>